<evidence type="ECO:0000250" key="1"/>
<evidence type="ECO:0000250" key="2">
    <source>
        <dbReference type="UniProtKB" id="P10398"/>
    </source>
</evidence>
<evidence type="ECO:0000255" key="3">
    <source>
        <dbReference type="PROSITE-ProRule" id="PRU00159"/>
    </source>
</evidence>
<evidence type="ECO:0000255" key="4">
    <source>
        <dbReference type="PROSITE-ProRule" id="PRU00226"/>
    </source>
</evidence>
<evidence type="ECO:0000255" key="5">
    <source>
        <dbReference type="PROSITE-ProRule" id="PRU00262"/>
    </source>
</evidence>
<evidence type="ECO:0000255" key="6">
    <source>
        <dbReference type="PROSITE-ProRule" id="PRU10027"/>
    </source>
</evidence>
<evidence type="ECO:0000256" key="7">
    <source>
        <dbReference type="SAM" id="MobiDB-lite"/>
    </source>
</evidence>
<evidence type="ECO:0000305" key="8"/>
<protein>
    <recommendedName>
        <fullName>Serine/threonine-protein kinase A-Raf</fullName>
        <ecNumber>2.7.11.1</ecNumber>
    </recommendedName>
    <alternativeName>
        <fullName>Proto-oncogene A-Raf</fullName>
    </alternativeName>
    <alternativeName>
        <fullName>Proto-oncogene A-Raf-1</fullName>
    </alternativeName>
</protein>
<proteinExistence type="evidence at transcript level"/>
<accession>O19004</accession>
<dbReference type="EC" id="2.7.11.1"/>
<dbReference type="EMBL" id="D88385">
    <property type="protein sequence ID" value="BAA22379.1"/>
    <property type="molecule type" value="mRNA"/>
</dbReference>
<dbReference type="RefSeq" id="NP_999494.1">
    <property type="nucleotide sequence ID" value="NM_214329.1"/>
</dbReference>
<dbReference type="RefSeq" id="XP_005657855.1">
    <property type="nucleotide sequence ID" value="XM_005657798.3"/>
</dbReference>
<dbReference type="BMRB" id="O19004"/>
<dbReference type="SMR" id="O19004"/>
<dbReference type="FunCoup" id="O19004">
    <property type="interactions" value="1601"/>
</dbReference>
<dbReference type="STRING" id="9823.ENSSSCP00000030304"/>
<dbReference type="PaxDb" id="9823-ENSSSCP00000013063"/>
<dbReference type="Ensembl" id="ENSSSCT00000013423.6">
    <property type="protein sequence ID" value="ENSSSCP00000013063.4"/>
    <property type="gene ID" value="ENSSSCG00000012275.6"/>
</dbReference>
<dbReference type="Ensembl" id="ENSSSCT00065107004.1">
    <property type="protein sequence ID" value="ENSSSCP00065047645.1"/>
    <property type="gene ID" value="ENSSSCG00065077117.1"/>
</dbReference>
<dbReference type="Ensembl" id="ENSSSCT00065107007.1">
    <property type="protein sequence ID" value="ENSSSCP00065047648.1"/>
    <property type="gene ID" value="ENSSSCG00065077117.1"/>
</dbReference>
<dbReference type="Ensembl" id="ENSSSCT00065107017.1">
    <property type="protein sequence ID" value="ENSSSCP00065047656.1"/>
    <property type="gene ID" value="ENSSSCG00065077117.1"/>
</dbReference>
<dbReference type="Ensembl" id="ENSSSCT00070014645.1">
    <property type="protein sequence ID" value="ENSSSCP00070012100.1"/>
    <property type="gene ID" value="ENSSSCG00070007562.1"/>
</dbReference>
<dbReference type="Ensembl" id="ENSSSCT00090014251">
    <property type="protein sequence ID" value="ENSSSCP00090009028"/>
    <property type="gene ID" value="ENSSSCG00090007989"/>
</dbReference>
<dbReference type="GeneID" id="397601"/>
<dbReference type="KEGG" id="ssc:397601"/>
<dbReference type="CTD" id="369"/>
<dbReference type="VGNC" id="VGNC:85438">
    <property type="gene designation" value="ARAF"/>
</dbReference>
<dbReference type="eggNOG" id="KOG0193">
    <property type="taxonomic scope" value="Eukaryota"/>
</dbReference>
<dbReference type="GeneTree" id="ENSGT00940000159633"/>
<dbReference type="HOGENOM" id="CLU_023684_1_1_1"/>
<dbReference type="InParanoid" id="O19004"/>
<dbReference type="OMA" id="WVHITIP"/>
<dbReference type="OrthoDB" id="774951at2759"/>
<dbReference type="TreeFam" id="TF317006"/>
<dbReference type="BRENDA" id="2.7.10.2">
    <property type="organism ID" value="6170"/>
</dbReference>
<dbReference type="Reactome" id="R-SSC-5673000">
    <property type="pathway name" value="RAF activation"/>
</dbReference>
<dbReference type="Reactome" id="R-SSC-5674135">
    <property type="pathway name" value="MAP2K and MAPK activation"/>
</dbReference>
<dbReference type="Reactome" id="R-SSC-5675221">
    <property type="pathway name" value="Negative regulation of MAPK pathway"/>
</dbReference>
<dbReference type="Proteomes" id="UP000008227">
    <property type="component" value="Chromosome X"/>
</dbReference>
<dbReference type="Proteomes" id="UP000314985">
    <property type="component" value="Unassembled WGS sequence"/>
</dbReference>
<dbReference type="Proteomes" id="UP000694570">
    <property type="component" value="Unplaced"/>
</dbReference>
<dbReference type="Proteomes" id="UP000694571">
    <property type="component" value="Unplaced"/>
</dbReference>
<dbReference type="Proteomes" id="UP000694720">
    <property type="component" value="Unplaced"/>
</dbReference>
<dbReference type="Proteomes" id="UP000694722">
    <property type="component" value="Unplaced"/>
</dbReference>
<dbReference type="Proteomes" id="UP000694723">
    <property type="component" value="Unplaced"/>
</dbReference>
<dbReference type="Proteomes" id="UP000694724">
    <property type="component" value="Unplaced"/>
</dbReference>
<dbReference type="Proteomes" id="UP000694725">
    <property type="component" value="Unplaced"/>
</dbReference>
<dbReference type="Proteomes" id="UP000694726">
    <property type="component" value="Unplaced"/>
</dbReference>
<dbReference type="Proteomes" id="UP000694727">
    <property type="component" value="Unplaced"/>
</dbReference>
<dbReference type="Proteomes" id="UP000694728">
    <property type="component" value="Unplaced"/>
</dbReference>
<dbReference type="GO" id="GO:0005737">
    <property type="term" value="C:cytoplasm"/>
    <property type="evidence" value="ECO:0000318"/>
    <property type="project" value="GO_Central"/>
</dbReference>
<dbReference type="GO" id="GO:0005829">
    <property type="term" value="C:cytosol"/>
    <property type="evidence" value="ECO:0000318"/>
    <property type="project" value="GO_Central"/>
</dbReference>
<dbReference type="GO" id="GO:0005739">
    <property type="term" value="C:mitochondrion"/>
    <property type="evidence" value="ECO:0000318"/>
    <property type="project" value="GO_Central"/>
</dbReference>
<dbReference type="GO" id="GO:0005524">
    <property type="term" value="F:ATP binding"/>
    <property type="evidence" value="ECO:0007669"/>
    <property type="project" value="UniProtKB-KW"/>
</dbReference>
<dbReference type="GO" id="GO:0004709">
    <property type="term" value="F:MAP kinase kinase kinase activity"/>
    <property type="evidence" value="ECO:0000318"/>
    <property type="project" value="GO_Central"/>
</dbReference>
<dbReference type="GO" id="GO:0106310">
    <property type="term" value="F:protein serine kinase activity"/>
    <property type="evidence" value="ECO:0007669"/>
    <property type="project" value="RHEA"/>
</dbReference>
<dbReference type="GO" id="GO:0008270">
    <property type="term" value="F:zinc ion binding"/>
    <property type="evidence" value="ECO:0007669"/>
    <property type="project" value="UniProtKB-KW"/>
</dbReference>
<dbReference type="GO" id="GO:0000165">
    <property type="term" value="P:MAPK cascade"/>
    <property type="evidence" value="ECO:0000318"/>
    <property type="project" value="GO_Central"/>
</dbReference>
<dbReference type="GO" id="GO:0032434">
    <property type="term" value="P:regulation of proteasomal ubiquitin-dependent protein catabolic process"/>
    <property type="evidence" value="ECO:0000250"/>
    <property type="project" value="UniProtKB"/>
</dbReference>
<dbReference type="GO" id="GO:0032006">
    <property type="term" value="P:regulation of TOR signaling"/>
    <property type="evidence" value="ECO:0000250"/>
    <property type="project" value="UniProtKB"/>
</dbReference>
<dbReference type="CDD" id="cd20870">
    <property type="entry name" value="C1_A_C-Raf"/>
    <property type="match status" value="1"/>
</dbReference>
<dbReference type="CDD" id="cd17133">
    <property type="entry name" value="RBD_ARAF"/>
    <property type="match status" value="1"/>
</dbReference>
<dbReference type="FunFam" id="3.10.20.90:FF:000015">
    <property type="entry name" value="B-Raf proto-oncogene serine/threonine-protein kinase"/>
    <property type="match status" value="1"/>
</dbReference>
<dbReference type="FunFam" id="3.30.200.20:FF:000024">
    <property type="entry name" value="B-Raf proto-oncogene serine/threonine-protein kinase"/>
    <property type="match status" value="1"/>
</dbReference>
<dbReference type="FunFam" id="3.30.60.20:FF:000004">
    <property type="entry name" value="B-Raf proto-oncogene serine/threonine-protein kinase"/>
    <property type="match status" value="1"/>
</dbReference>
<dbReference type="FunFam" id="1.10.510.10:FF:000036">
    <property type="entry name" value="RAF proto-oncogene serine/threonine-protein kinase"/>
    <property type="match status" value="1"/>
</dbReference>
<dbReference type="Gene3D" id="3.30.60.20">
    <property type="match status" value="1"/>
</dbReference>
<dbReference type="Gene3D" id="3.10.20.90">
    <property type="entry name" value="Phosphatidylinositol 3-kinase Catalytic Subunit, Chain A, domain 1"/>
    <property type="match status" value="1"/>
</dbReference>
<dbReference type="Gene3D" id="3.30.200.20">
    <property type="entry name" value="Phosphorylase Kinase, domain 1"/>
    <property type="match status" value="1"/>
</dbReference>
<dbReference type="Gene3D" id="1.10.510.10">
    <property type="entry name" value="Transferase(Phosphotransferase) domain 1"/>
    <property type="match status" value="1"/>
</dbReference>
<dbReference type="InterPro" id="IPR046349">
    <property type="entry name" value="C1-like_sf"/>
</dbReference>
<dbReference type="InterPro" id="IPR020454">
    <property type="entry name" value="DAG/PE-bd"/>
</dbReference>
<dbReference type="InterPro" id="IPR011009">
    <property type="entry name" value="Kinase-like_dom_sf"/>
</dbReference>
<dbReference type="InterPro" id="IPR002219">
    <property type="entry name" value="PE/DAG-bd"/>
</dbReference>
<dbReference type="InterPro" id="IPR000719">
    <property type="entry name" value="Prot_kinase_dom"/>
</dbReference>
<dbReference type="InterPro" id="IPR017441">
    <property type="entry name" value="Protein_kinase_ATP_BS"/>
</dbReference>
<dbReference type="InterPro" id="IPR003116">
    <property type="entry name" value="RBD_dom"/>
</dbReference>
<dbReference type="InterPro" id="IPR001245">
    <property type="entry name" value="Ser-Thr/Tyr_kinase_cat_dom"/>
</dbReference>
<dbReference type="InterPro" id="IPR008271">
    <property type="entry name" value="Ser/Thr_kinase_AS"/>
</dbReference>
<dbReference type="InterPro" id="IPR051681">
    <property type="entry name" value="Ser/Thr_Kinases-Pseudokinases"/>
</dbReference>
<dbReference type="InterPro" id="IPR029071">
    <property type="entry name" value="Ubiquitin-like_domsf"/>
</dbReference>
<dbReference type="PANTHER" id="PTHR44329">
    <property type="entry name" value="SERINE/THREONINE-PROTEIN KINASE TNNI3K-RELATED"/>
    <property type="match status" value="1"/>
</dbReference>
<dbReference type="PANTHER" id="PTHR44329:SF55">
    <property type="entry name" value="SERINE_THREONINE-PROTEIN KINASE A-RAF"/>
    <property type="match status" value="1"/>
</dbReference>
<dbReference type="Pfam" id="PF00130">
    <property type="entry name" value="C1_1"/>
    <property type="match status" value="1"/>
</dbReference>
<dbReference type="Pfam" id="PF07714">
    <property type="entry name" value="PK_Tyr_Ser-Thr"/>
    <property type="match status" value="1"/>
</dbReference>
<dbReference type="Pfam" id="PF02196">
    <property type="entry name" value="RBD"/>
    <property type="match status" value="1"/>
</dbReference>
<dbReference type="PRINTS" id="PR00008">
    <property type="entry name" value="DAGPEDOMAIN"/>
</dbReference>
<dbReference type="SMART" id="SM00109">
    <property type="entry name" value="C1"/>
    <property type="match status" value="1"/>
</dbReference>
<dbReference type="SMART" id="SM00455">
    <property type="entry name" value="RBD"/>
    <property type="match status" value="1"/>
</dbReference>
<dbReference type="SMART" id="SM00220">
    <property type="entry name" value="S_TKc"/>
    <property type="match status" value="1"/>
</dbReference>
<dbReference type="SUPFAM" id="SSF57889">
    <property type="entry name" value="Cysteine-rich domain"/>
    <property type="match status" value="1"/>
</dbReference>
<dbReference type="SUPFAM" id="SSF56112">
    <property type="entry name" value="Protein kinase-like (PK-like)"/>
    <property type="match status" value="1"/>
</dbReference>
<dbReference type="SUPFAM" id="SSF54236">
    <property type="entry name" value="Ubiquitin-like"/>
    <property type="match status" value="1"/>
</dbReference>
<dbReference type="PROSITE" id="PS00107">
    <property type="entry name" value="PROTEIN_KINASE_ATP"/>
    <property type="match status" value="1"/>
</dbReference>
<dbReference type="PROSITE" id="PS50011">
    <property type="entry name" value="PROTEIN_KINASE_DOM"/>
    <property type="match status" value="1"/>
</dbReference>
<dbReference type="PROSITE" id="PS00108">
    <property type="entry name" value="PROTEIN_KINASE_ST"/>
    <property type="match status" value="1"/>
</dbReference>
<dbReference type="PROSITE" id="PS50898">
    <property type="entry name" value="RBD"/>
    <property type="match status" value="1"/>
</dbReference>
<dbReference type="PROSITE" id="PS00479">
    <property type="entry name" value="ZF_DAG_PE_1"/>
    <property type="match status" value="1"/>
</dbReference>
<dbReference type="PROSITE" id="PS50081">
    <property type="entry name" value="ZF_DAG_PE_2"/>
    <property type="match status" value="1"/>
</dbReference>
<organism>
    <name type="scientific">Sus scrofa</name>
    <name type="common">Pig</name>
    <dbReference type="NCBI Taxonomy" id="9823"/>
    <lineage>
        <taxon>Eukaryota</taxon>
        <taxon>Metazoa</taxon>
        <taxon>Chordata</taxon>
        <taxon>Craniata</taxon>
        <taxon>Vertebrata</taxon>
        <taxon>Euteleostomi</taxon>
        <taxon>Mammalia</taxon>
        <taxon>Eutheria</taxon>
        <taxon>Laurasiatheria</taxon>
        <taxon>Artiodactyla</taxon>
        <taxon>Suina</taxon>
        <taxon>Suidae</taxon>
        <taxon>Sus</taxon>
    </lineage>
</organism>
<gene>
    <name type="primary">ARAF</name>
    <name type="synonym">ARAF1</name>
</gene>
<sequence>MEPPRGPPANGAEPSRAVGTVKVYLPNKQRTVVTVRDGMSVYDSLDKALKVRGLNQDCCVVYRLIKGRKTVTAWDTAIAPLDGEELIVEVLEDVPLTMHNFVRKTFFSLAFCDFCLKFLFHGFRCQTCGYKFHQHCSSKVPTVCVDMSTNRRQFYHSVQDLSGGSRQHETPSNRPLNEPLTPQGPSSCTQHRDPEHFPFPAPANAPLQRIRSTSTPNVHMVSTTAPMDSGLVQLTAQSFNTDAAGNRGGGDGAPRGSPSPASVSSGRKSPHSKSPSEQRERKSLADDKKKVKNLGYRDSGYYWEVPPSEVQLLKRIGTGSFGTVFRGRWHGDVAVKVLKVAQPTAEQAQAFKNEMQVLRKTRHVNILLFMGFMTRPGFAIITQWCEGSSLYHHLHVADTRFDMVQLIDVARQTAQGMDYLHAKNIIHRDLKSNNIFLHEGLTVKIGDFGLATVKTRWSGAQPLEQPSGSVLWMAAEVIRMQDPNPYSFQSDVYAYGVVLYELMTGSLPYSHIGSRDQIIFMVGRGYLSPDLSKISSNCPKAMRRLLSDCLKFQREERPLFPQILATIELLQRSLPKIERSASEPSLHRTQADELPACLLSAARLVP</sequence>
<comment type="function">
    <text evidence="2">Involved in the transduction of mitogenic signals from the cell membrane to the nucleus. May also regulate the TOR signaling cascade (By similarity). Phosphorylates PFKFB2 (By similarity).</text>
</comment>
<comment type="catalytic activity">
    <reaction>
        <text>L-seryl-[protein] + ATP = O-phospho-L-seryl-[protein] + ADP + H(+)</text>
        <dbReference type="Rhea" id="RHEA:17989"/>
        <dbReference type="Rhea" id="RHEA-COMP:9863"/>
        <dbReference type="Rhea" id="RHEA-COMP:11604"/>
        <dbReference type="ChEBI" id="CHEBI:15378"/>
        <dbReference type="ChEBI" id="CHEBI:29999"/>
        <dbReference type="ChEBI" id="CHEBI:30616"/>
        <dbReference type="ChEBI" id="CHEBI:83421"/>
        <dbReference type="ChEBI" id="CHEBI:456216"/>
        <dbReference type="EC" id="2.7.11.1"/>
    </reaction>
</comment>
<comment type="catalytic activity">
    <reaction>
        <text>L-threonyl-[protein] + ATP = O-phospho-L-threonyl-[protein] + ADP + H(+)</text>
        <dbReference type="Rhea" id="RHEA:46608"/>
        <dbReference type="Rhea" id="RHEA-COMP:11060"/>
        <dbReference type="Rhea" id="RHEA-COMP:11605"/>
        <dbReference type="ChEBI" id="CHEBI:15378"/>
        <dbReference type="ChEBI" id="CHEBI:30013"/>
        <dbReference type="ChEBI" id="CHEBI:30616"/>
        <dbReference type="ChEBI" id="CHEBI:61977"/>
        <dbReference type="ChEBI" id="CHEBI:456216"/>
        <dbReference type="EC" id="2.7.11.1"/>
    </reaction>
</comment>
<comment type="cofactor">
    <cofactor evidence="1">
        <name>Zn(2+)</name>
        <dbReference type="ChEBI" id="CHEBI:29105"/>
    </cofactor>
    <text evidence="1">Binds 2 Zn(2+) ions per subunit.</text>
</comment>
<comment type="subunit">
    <text evidence="1">Interacts with TH1L/NELFD.</text>
</comment>
<comment type="PTM">
    <text evidence="2">Dephosphorylation by the SHOC2-MRAS-PP1c (SMP) complex consisting of SHOC2, GTP-bound M-Ras/MRAS and the catalytic subunit of protein phosphatase 1 (PPP1CA, PPP1CB or PPP1CC); this relieves inactivation and stimulates kinase activity.</text>
</comment>
<comment type="similarity">
    <text evidence="8">Belongs to the protein kinase superfamily. TKL Ser/Thr protein kinase family. RAF subfamily.</text>
</comment>
<keyword id="KW-0067">ATP-binding</keyword>
<keyword id="KW-0418">Kinase</keyword>
<keyword id="KW-0479">Metal-binding</keyword>
<keyword id="KW-0547">Nucleotide-binding</keyword>
<keyword id="KW-0597">Phosphoprotein</keyword>
<keyword id="KW-0656">Proto-oncogene</keyword>
<keyword id="KW-1185">Reference proteome</keyword>
<keyword id="KW-0723">Serine/threonine-protein kinase</keyword>
<keyword id="KW-0808">Transferase</keyword>
<keyword id="KW-0862">Zinc</keyword>
<keyword id="KW-0863">Zinc-finger</keyword>
<reference key="1">
    <citation type="journal article" date="1997" name="Mamm. Genome">
        <title>Assignment of ARAF1 to porcine chromosome Xp11.2-p13 by fluorescence in situ hybridization.</title>
        <authorList>
            <person name="Yasue H."/>
            <person name="Adams L."/>
            <person name="Ozawa A."/>
            <person name="Hanazono M."/>
            <person name="Li N."/>
            <person name="Lin Z.H."/>
            <person name="Kusumoto H."/>
        </authorList>
    </citation>
    <scope>NUCLEOTIDE SEQUENCE [MRNA]</scope>
    <source>
        <strain>Landrace</strain>
        <tissue>Liver</tissue>
    </source>
</reference>
<name>ARAF_PIG</name>
<feature type="chain" id="PRO_0000085624" description="Serine/threonine-protein kinase A-Raf">
    <location>
        <begin position="1"/>
        <end position="606"/>
    </location>
</feature>
<feature type="domain" description="RBD" evidence="5">
    <location>
        <begin position="19"/>
        <end position="91"/>
    </location>
</feature>
<feature type="domain" description="Protein kinase" evidence="3">
    <location>
        <begin position="310"/>
        <end position="570"/>
    </location>
</feature>
<feature type="zinc finger region" description="Phorbol-ester/DAG-type" evidence="4">
    <location>
        <begin position="98"/>
        <end position="144"/>
    </location>
</feature>
<feature type="region of interest" description="Disordered" evidence="7">
    <location>
        <begin position="158"/>
        <end position="207"/>
    </location>
</feature>
<feature type="region of interest" description="Disordered" evidence="7">
    <location>
        <begin position="241"/>
        <end position="290"/>
    </location>
</feature>
<feature type="compositionally biased region" description="Low complexity" evidence="7">
    <location>
        <begin position="254"/>
        <end position="267"/>
    </location>
</feature>
<feature type="compositionally biased region" description="Basic and acidic residues" evidence="7">
    <location>
        <begin position="274"/>
        <end position="289"/>
    </location>
</feature>
<feature type="active site" description="Proton acceptor" evidence="3 6">
    <location>
        <position position="429"/>
    </location>
</feature>
<feature type="binding site" evidence="1">
    <location>
        <position position="99"/>
    </location>
    <ligand>
        <name>Zn(2+)</name>
        <dbReference type="ChEBI" id="CHEBI:29105"/>
        <label>1</label>
    </ligand>
</feature>
<feature type="binding site" evidence="1">
    <location>
        <position position="112"/>
    </location>
    <ligand>
        <name>Zn(2+)</name>
        <dbReference type="ChEBI" id="CHEBI:29105"/>
        <label>2</label>
    </ligand>
</feature>
<feature type="binding site" evidence="1">
    <location>
        <position position="115"/>
    </location>
    <ligand>
        <name>Zn(2+)</name>
        <dbReference type="ChEBI" id="CHEBI:29105"/>
        <label>2</label>
    </ligand>
</feature>
<feature type="binding site" evidence="1">
    <location>
        <position position="125"/>
    </location>
    <ligand>
        <name>Zn(2+)</name>
        <dbReference type="ChEBI" id="CHEBI:29105"/>
        <label>1</label>
    </ligand>
</feature>
<feature type="binding site" evidence="1">
    <location>
        <position position="128"/>
    </location>
    <ligand>
        <name>Zn(2+)</name>
        <dbReference type="ChEBI" id="CHEBI:29105"/>
        <label>1</label>
    </ligand>
</feature>
<feature type="binding site" evidence="1">
    <location>
        <position position="133"/>
    </location>
    <ligand>
        <name>Zn(2+)</name>
        <dbReference type="ChEBI" id="CHEBI:29105"/>
        <label>2</label>
    </ligand>
</feature>
<feature type="binding site" evidence="1">
    <location>
        <position position="136"/>
    </location>
    <ligand>
        <name>Zn(2+)</name>
        <dbReference type="ChEBI" id="CHEBI:29105"/>
        <label>2</label>
    </ligand>
</feature>
<feature type="binding site" evidence="1">
    <location>
        <position position="144"/>
    </location>
    <ligand>
        <name>Zn(2+)</name>
        <dbReference type="ChEBI" id="CHEBI:29105"/>
        <label>1</label>
    </ligand>
</feature>
<feature type="binding site" evidence="3">
    <location>
        <begin position="316"/>
        <end position="324"/>
    </location>
    <ligand>
        <name>ATP</name>
        <dbReference type="ChEBI" id="CHEBI:30616"/>
    </ligand>
</feature>
<feature type="binding site" evidence="3">
    <location>
        <position position="336"/>
    </location>
    <ligand>
        <name>ATP</name>
        <dbReference type="ChEBI" id="CHEBI:30616"/>
    </ligand>
</feature>
<feature type="modified residue" description="Phosphoserine" evidence="2">
    <location>
        <position position="157"/>
    </location>
</feature>
<feature type="modified residue" description="Phosphoserine" evidence="2">
    <location>
        <position position="162"/>
    </location>
</feature>
<feature type="modified residue" description="Phosphothreonine" evidence="2">
    <location>
        <position position="181"/>
    </location>
</feature>
<feature type="modified residue" description="Phosphoserine" evidence="2">
    <location>
        <position position="186"/>
    </location>
</feature>
<feature type="modified residue" description="Phosphoserine" evidence="2">
    <location>
        <position position="257"/>
    </location>
</feature>
<feature type="modified residue" description="Phosphoserine" evidence="2">
    <location>
        <position position="269"/>
    </location>
</feature>
<feature type="modified residue" description="Phosphothreonine" evidence="2">
    <location>
        <position position="318"/>
    </location>
</feature>